<evidence type="ECO:0000250" key="1"/>
<evidence type="ECO:0000305" key="2"/>
<dbReference type="EC" id="6.1.1.21"/>
<dbReference type="EMBL" id="AE014075">
    <property type="protein sequence ID" value="AAN81486.1"/>
    <property type="molecule type" value="Genomic_DNA"/>
</dbReference>
<dbReference type="RefSeq" id="WP_001107167.1">
    <property type="nucleotide sequence ID" value="NZ_CP051263.1"/>
</dbReference>
<dbReference type="SMR" id="P60907"/>
<dbReference type="STRING" id="199310.c3036"/>
<dbReference type="GeneID" id="75206207"/>
<dbReference type="KEGG" id="ecc:c3036"/>
<dbReference type="eggNOG" id="COG0124">
    <property type="taxonomic scope" value="Bacteria"/>
</dbReference>
<dbReference type="HOGENOM" id="CLU_025113_1_1_6"/>
<dbReference type="BioCyc" id="ECOL199310:C3036-MONOMER"/>
<dbReference type="SABIO-RK" id="P60907"/>
<dbReference type="Proteomes" id="UP000001410">
    <property type="component" value="Chromosome"/>
</dbReference>
<dbReference type="GO" id="GO:0005737">
    <property type="term" value="C:cytoplasm"/>
    <property type="evidence" value="ECO:0007669"/>
    <property type="project" value="UniProtKB-SubCell"/>
</dbReference>
<dbReference type="GO" id="GO:0005524">
    <property type="term" value="F:ATP binding"/>
    <property type="evidence" value="ECO:0007669"/>
    <property type="project" value="UniProtKB-UniRule"/>
</dbReference>
<dbReference type="GO" id="GO:0004821">
    <property type="term" value="F:histidine-tRNA ligase activity"/>
    <property type="evidence" value="ECO:0007669"/>
    <property type="project" value="UniProtKB-UniRule"/>
</dbReference>
<dbReference type="GO" id="GO:0006427">
    <property type="term" value="P:histidyl-tRNA aminoacylation"/>
    <property type="evidence" value="ECO:0007669"/>
    <property type="project" value="UniProtKB-UniRule"/>
</dbReference>
<dbReference type="CDD" id="cd00773">
    <property type="entry name" value="HisRS-like_core"/>
    <property type="match status" value="1"/>
</dbReference>
<dbReference type="CDD" id="cd00859">
    <property type="entry name" value="HisRS_anticodon"/>
    <property type="match status" value="1"/>
</dbReference>
<dbReference type="FunFam" id="3.30.930.10:FF:000005">
    <property type="entry name" value="Histidine--tRNA ligase"/>
    <property type="match status" value="1"/>
</dbReference>
<dbReference type="FunFam" id="3.40.50.800:FF:000007">
    <property type="entry name" value="Histidine--tRNA ligase"/>
    <property type="match status" value="1"/>
</dbReference>
<dbReference type="Gene3D" id="3.40.50.800">
    <property type="entry name" value="Anticodon-binding domain"/>
    <property type="match status" value="1"/>
</dbReference>
<dbReference type="Gene3D" id="3.30.930.10">
    <property type="entry name" value="Bira Bifunctional Protein, Domain 2"/>
    <property type="match status" value="1"/>
</dbReference>
<dbReference type="HAMAP" id="MF_00127">
    <property type="entry name" value="His_tRNA_synth"/>
    <property type="match status" value="1"/>
</dbReference>
<dbReference type="InterPro" id="IPR006195">
    <property type="entry name" value="aa-tRNA-synth_II"/>
</dbReference>
<dbReference type="InterPro" id="IPR045864">
    <property type="entry name" value="aa-tRNA-synth_II/BPL/LPL"/>
</dbReference>
<dbReference type="InterPro" id="IPR004154">
    <property type="entry name" value="Anticodon-bd"/>
</dbReference>
<dbReference type="InterPro" id="IPR036621">
    <property type="entry name" value="Anticodon-bd_dom_sf"/>
</dbReference>
<dbReference type="InterPro" id="IPR015807">
    <property type="entry name" value="His-tRNA-ligase"/>
</dbReference>
<dbReference type="InterPro" id="IPR041715">
    <property type="entry name" value="HisRS-like_core"/>
</dbReference>
<dbReference type="InterPro" id="IPR004516">
    <property type="entry name" value="HisRS/HisZ"/>
</dbReference>
<dbReference type="InterPro" id="IPR033656">
    <property type="entry name" value="HisRS_anticodon"/>
</dbReference>
<dbReference type="NCBIfam" id="TIGR00442">
    <property type="entry name" value="hisS"/>
    <property type="match status" value="1"/>
</dbReference>
<dbReference type="PANTHER" id="PTHR43707:SF1">
    <property type="entry name" value="HISTIDINE--TRNA LIGASE, MITOCHONDRIAL-RELATED"/>
    <property type="match status" value="1"/>
</dbReference>
<dbReference type="PANTHER" id="PTHR43707">
    <property type="entry name" value="HISTIDYL-TRNA SYNTHETASE"/>
    <property type="match status" value="1"/>
</dbReference>
<dbReference type="Pfam" id="PF03129">
    <property type="entry name" value="HGTP_anticodon"/>
    <property type="match status" value="1"/>
</dbReference>
<dbReference type="Pfam" id="PF13393">
    <property type="entry name" value="tRNA-synt_His"/>
    <property type="match status" value="1"/>
</dbReference>
<dbReference type="PIRSF" id="PIRSF001549">
    <property type="entry name" value="His-tRNA_synth"/>
    <property type="match status" value="1"/>
</dbReference>
<dbReference type="SUPFAM" id="SSF52954">
    <property type="entry name" value="Class II aaRS ABD-related"/>
    <property type="match status" value="1"/>
</dbReference>
<dbReference type="SUPFAM" id="SSF55681">
    <property type="entry name" value="Class II aaRS and biotin synthetases"/>
    <property type="match status" value="1"/>
</dbReference>
<dbReference type="PROSITE" id="PS50862">
    <property type="entry name" value="AA_TRNA_LIGASE_II"/>
    <property type="match status" value="1"/>
</dbReference>
<reference key="1">
    <citation type="journal article" date="2002" name="Proc. Natl. Acad. Sci. U.S.A.">
        <title>Extensive mosaic structure revealed by the complete genome sequence of uropathogenic Escherichia coli.</title>
        <authorList>
            <person name="Welch R.A."/>
            <person name="Burland V."/>
            <person name="Plunkett G. III"/>
            <person name="Redford P."/>
            <person name="Roesch P."/>
            <person name="Rasko D."/>
            <person name="Buckles E.L."/>
            <person name="Liou S.-R."/>
            <person name="Boutin A."/>
            <person name="Hackett J."/>
            <person name="Stroud D."/>
            <person name="Mayhew G.F."/>
            <person name="Rose D.J."/>
            <person name="Zhou S."/>
            <person name="Schwartz D.C."/>
            <person name="Perna N.T."/>
            <person name="Mobley H.L.T."/>
            <person name="Donnenberg M.S."/>
            <person name="Blattner F.R."/>
        </authorList>
    </citation>
    <scope>NUCLEOTIDE SEQUENCE [LARGE SCALE GENOMIC DNA]</scope>
    <source>
        <strain>CFT073 / ATCC 700928 / UPEC</strain>
    </source>
</reference>
<protein>
    <recommendedName>
        <fullName>Histidine--tRNA ligase</fullName>
        <ecNumber>6.1.1.21</ecNumber>
    </recommendedName>
    <alternativeName>
        <fullName>Histidyl-tRNA synthetase</fullName>
        <shortName>HisRS</shortName>
    </alternativeName>
</protein>
<organism>
    <name type="scientific">Escherichia coli O6:H1 (strain CFT073 / ATCC 700928 / UPEC)</name>
    <dbReference type="NCBI Taxonomy" id="199310"/>
    <lineage>
        <taxon>Bacteria</taxon>
        <taxon>Pseudomonadati</taxon>
        <taxon>Pseudomonadota</taxon>
        <taxon>Gammaproteobacteria</taxon>
        <taxon>Enterobacterales</taxon>
        <taxon>Enterobacteriaceae</taxon>
        <taxon>Escherichia</taxon>
    </lineage>
</organism>
<accession>P60907</accession>
<accession>P04804</accession>
<sequence length="424" mass="47029">MAKNIQAIRGMNDYLPGETAIWQRIEGTLKNVLGSYGYSEIRLPIVEQTPLFKRAIGEVTDVVEKEMYTFEDRNGDSLTLRPEGTAGCVRAGIEHGLLYNQEQRLWYIGPMFRHERPQKGRYRQFHQLGCEVFGLQGPDIDAELIMLTARWWRALGISEHVTLELNSIGSLEARANYRDALVAFLEQHKEKLDEDCKRRMYTNPLRVLDSKNPEVQALLNDAPALGDYLDEESREHFAGLCKLLESAGIAYTVNQRLVRGLDYYNRTVFEWVTNSLGSQGTVCAGGRYDGLVEQLGGRATPAVGFAMGLERLVLLVQAVNPEFKADPVVDIYLVASGADTQSAAMALAERLRDELPGVKLMTNHGGGNFKKQFARADKWGARVAVVLGESEVANGTAVVKDLRSGEQTAVAQDSVAAHLRTLLG</sequence>
<keyword id="KW-0030">Aminoacyl-tRNA synthetase</keyword>
<keyword id="KW-0067">ATP-binding</keyword>
<keyword id="KW-0963">Cytoplasm</keyword>
<keyword id="KW-0436">Ligase</keyword>
<keyword id="KW-0547">Nucleotide-binding</keyword>
<keyword id="KW-0648">Protein biosynthesis</keyword>
<keyword id="KW-1185">Reference proteome</keyword>
<gene>
    <name type="primary">hisS</name>
    <name type="ordered locus">c3036</name>
</gene>
<comment type="catalytic activity">
    <reaction>
        <text>tRNA(His) + L-histidine + ATP = L-histidyl-tRNA(His) + AMP + diphosphate + H(+)</text>
        <dbReference type="Rhea" id="RHEA:17313"/>
        <dbReference type="Rhea" id="RHEA-COMP:9665"/>
        <dbReference type="Rhea" id="RHEA-COMP:9689"/>
        <dbReference type="ChEBI" id="CHEBI:15378"/>
        <dbReference type="ChEBI" id="CHEBI:30616"/>
        <dbReference type="ChEBI" id="CHEBI:33019"/>
        <dbReference type="ChEBI" id="CHEBI:57595"/>
        <dbReference type="ChEBI" id="CHEBI:78442"/>
        <dbReference type="ChEBI" id="CHEBI:78527"/>
        <dbReference type="ChEBI" id="CHEBI:456215"/>
        <dbReference type="EC" id="6.1.1.21"/>
    </reaction>
</comment>
<comment type="subunit">
    <text evidence="1">Homodimer.</text>
</comment>
<comment type="subcellular location">
    <subcellularLocation>
        <location evidence="1">Cytoplasm</location>
    </subcellularLocation>
</comment>
<comment type="similarity">
    <text evidence="2">Belongs to the class-II aminoacyl-tRNA synthetase family.</text>
</comment>
<proteinExistence type="inferred from homology"/>
<feature type="initiator methionine" description="Removed" evidence="1">
    <location>
        <position position="1"/>
    </location>
</feature>
<feature type="chain" id="PRO_0000136163" description="Histidine--tRNA ligase">
    <location>
        <begin position="2"/>
        <end position="424"/>
    </location>
</feature>
<name>SYH_ECOL6</name>